<accession>D2BGI6</accession>
<name>SECD_DEHMV</name>
<proteinExistence type="inferred from homology"/>
<gene>
    <name evidence="1" type="primary">secD</name>
    <name type="ordered locus">DhcVS_275</name>
</gene>
<sequence>MRRKNGLVFLAILAAMILAFTIVLPTDKGALLGKGILFGLDLKGGLHMVYQADLSNVDESNIDGVMDGVVEVISNRINPLGVTEASIQRQGDDRIVVELPGLDITDEQKARIGRTALLEFGELAADGEDYKWENSLGKWKPATATIDGVEYTLTSAYFKDSTYVNRDQYGNILLVFEWDDIGAQLSKEITTRLLNQQLGIFEGDEALSGDNGIPIAPVINNVIETSGVIEGLSYNEAEMLSNQLNAGRLPVPLEPIYEQTVSPTLGQNFVDLAVKAGLVGIILVMIFMIAFYRLPGLLASIALVFYGVIVLALFKLVPVTLTLAGIGGFIVSAGMAVDANILIFARLKEELLTGKTLGAAVEAGFSRAWSAIWDSNVTTFIACGILFWVGGTIAAGAPVKGFAVTLFLGVAVSMFTAIFVTRTLLRLFVGTKTGKKLALFTTQTRGKNE</sequence>
<organism>
    <name type="scientific">Dehalococcoides mccartyi (strain VS)</name>
    <dbReference type="NCBI Taxonomy" id="311424"/>
    <lineage>
        <taxon>Bacteria</taxon>
        <taxon>Bacillati</taxon>
        <taxon>Chloroflexota</taxon>
        <taxon>Dehalococcoidia</taxon>
        <taxon>Dehalococcoidales</taxon>
        <taxon>Dehalococcoidaceae</taxon>
        <taxon>Dehalococcoides</taxon>
    </lineage>
</organism>
<protein>
    <recommendedName>
        <fullName evidence="1">Protein translocase subunit SecD</fullName>
    </recommendedName>
</protein>
<dbReference type="EMBL" id="CP001827">
    <property type="protein sequence ID" value="ACZ61436.1"/>
    <property type="molecule type" value="Genomic_DNA"/>
</dbReference>
<dbReference type="RefSeq" id="WP_012881612.1">
    <property type="nucleotide sequence ID" value="NC_013552.1"/>
</dbReference>
<dbReference type="SMR" id="D2BGI6"/>
<dbReference type="KEGG" id="dev:DhcVS_275"/>
<dbReference type="eggNOG" id="COG0342">
    <property type="taxonomic scope" value="Bacteria"/>
</dbReference>
<dbReference type="HOGENOM" id="CLU_007894_4_2_0"/>
<dbReference type="OrthoDB" id="9805019at2"/>
<dbReference type="Proteomes" id="UP000002506">
    <property type="component" value="Chromosome"/>
</dbReference>
<dbReference type="GO" id="GO:0005886">
    <property type="term" value="C:plasma membrane"/>
    <property type="evidence" value="ECO:0007669"/>
    <property type="project" value="UniProtKB-SubCell"/>
</dbReference>
<dbReference type="GO" id="GO:0015450">
    <property type="term" value="F:protein-transporting ATPase activity"/>
    <property type="evidence" value="ECO:0007669"/>
    <property type="project" value="InterPro"/>
</dbReference>
<dbReference type="GO" id="GO:0065002">
    <property type="term" value="P:intracellular protein transmembrane transport"/>
    <property type="evidence" value="ECO:0007669"/>
    <property type="project" value="UniProtKB-UniRule"/>
</dbReference>
<dbReference type="GO" id="GO:0006605">
    <property type="term" value="P:protein targeting"/>
    <property type="evidence" value="ECO:0007669"/>
    <property type="project" value="UniProtKB-UniRule"/>
</dbReference>
<dbReference type="GO" id="GO:0043952">
    <property type="term" value="P:protein transport by the Sec complex"/>
    <property type="evidence" value="ECO:0007669"/>
    <property type="project" value="UniProtKB-UniRule"/>
</dbReference>
<dbReference type="Gene3D" id="3.30.1360.200">
    <property type="match status" value="1"/>
</dbReference>
<dbReference type="Gene3D" id="3.30.70.3400">
    <property type="match status" value="1"/>
</dbReference>
<dbReference type="Gene3D" id="1.20.1640.10">
    <property type="entry name" value="Multidrug efflux transporter AcrB transmembrane domain"/>
    <property type="match status" value="1"/>
</dbReference>
<dbReference type="HAMAP" id="MF_01463_B">
    <property type="entry name" value="SecD_B"/>
    <property type="match status" value="1"/>
</dbReference>
<dbReference type="InterPro" id="IPR001036">
    <property type="entry name" value="Acrflvin-R"/>
</dbReference>
<dbReference type="InterPro" id="IPR005791">
    <property type="entry name" value="SecD"/>
</dbReference>
<dbReference type="InterPro" id="IPR022813">
    <property type="entry name" value="SecD/SecF_arch_bac"/>
</dbReference>
<dbReference type="InterPro" id="IPR048631">
    <property type="entry name" value="SecD_1st"/>
</dbReference>
<dbReference type="InterPro" id="IPR048634">
    <property type="entry name" value="SecD_SecF_C"/>
</dbReference>
<dbReference type="InterPro" id="IPR055344">
    <property type="entry name" value="SecD_SecF_C_bact"/>
</dbReference>
<dbReference type="InterPro" id="IPR054384">
    <property type="entry name" value="SecDF_P1_head"/>
</dbReference>
<dbReference type="NCBIfam" id="TIGR00916">
    <property type="entry name" value="2A0604s01"/>
    <property type="match status" value="1"/>
</dbReference>
<dbReference type="NCBIfam" id="TIGR01129">
    <property type="entry name" value="secD"/>
    <property type="match status" value="1"/>
</dbReference>
<dbReference type="PANTHER" id="PTHR30081:SF1">
    <property type="entry name" value="PROTEIN TRANSLOCASE SUBUNIT SECD"/>
    <property type="match status" value="1"/>
</dbReference>
<dbReference type="PANTHER" id="PTHR30081">
    <property type="entry name" value="PROTEIN-EXPORT MEMBRANE PROTEIN SEC"/>
    <property type="match status" value="1"/>
</dbReference>
<dbReference type="Pfam" id="PF21760">
    <property type="entry name" value="SecD_1st"/>
    <property type="match status" value="1"/>
</dbReference>
<dbReference type="Pfam" id="PF02355">
    <property type="entry name" value="SecD_SecF_C"/>
    <property type="match status" value="1"/>
</dbReference>
<dbReference type="Pfam" id="PF22599">
    <property type="entry name" value="SecDF_P1_head"/>
    <property type="match status" value="1"/>
</dbReference>
<dbReference type="PRINTS" id="PR00702">
    <property type="entry name" value="ACRIFLAVINRP"/>
</dbReference>
<dbReference type="SUPFAM" id="SSF82866">
    <property type="entry name" value="Multidrug efflux transporter AcrB transmembrane domain"/>
    <property type="match status" value="1"/>
</dbReference>
<comment type="function">
    <text evidence="1">Part of the Sec protein translocase complex. Interacts with the SecYEG preprotein conducting channel. SecDF uses the proton motive force (PMF) to complete protein translocation after the ATP-dependent function of SecA.</text>
</comment>
<comment type="subunit">
    <text evidence="1">Forms a complex with SecF. Part of the essential Sec protein translocation apparatus which comprises SecA, SecYEG and auxiliary proteins SecDF. Other proteins may also be involved.</text>
</comment>
<comment type="subcellular location">
    <subcellularLocation>
        <location evidence="1">Cell membrane</location>
        <topology evidence="1">Multi-pass membrane protein</topology>
    </subcellularLocation>
</comment>
<comment type="similarity">
    <text evidence="1">Belongs to the SecD/SecF family. SecD subfamily.</text>
</comment>
<feature type="chain" id="PRO_0000412674" description="Protein translocase subunit SecD">
    <location>
        <begin position="1"/>
        <end position="449"/>
    </location>
</feature>
<feature type="transmembrane region" description="Helical" evidence="1">
    <location>
        <begin position="6"/>
        <end position="26"/>
    </location>
</feature>
<feature type="transmembrane region" description="Helical" evidence="1">
    <location>
        <begin position="272"/>
        <end position="292"/>
    </location>
</feature>
<feature type="transmembrane region" description="Helical" evidence="1">
    <location>
        <begin position="294"/>
        <end position="314"/>
    </location>
</feature>
<feature type="transmembrane region" description="Helical" evidence="1">
    <location>
        <begin position="317"/>
        <end position="337"/>
    </location>
</feature>
<feature type="transmembrane region" description="Helical" evidence="1">
    <location>
        <begin position="379"/>
        <end position="399"/>
    </location>
</feature>
<feature type="transmembrane region" description="Helical" evidence="1">
    <location>
        <begin position="401"/>
        <end position="421"/>
    </location>
</feature>
<keyword id="KW-1003">Cell membrane</keyword>
<keyword id="KW-0472">Membrane</keyword>
<keyword id="KW-0653">Protein transport</keyword>
<keyword id="KW-1185">Reference proteome</keyword>
<keyword id="KW-0811">Translocation</keyword>
<keyword id="KW-0812">Transmembrane</keyword>
<keyword id="KW-1133">Transmembrane helix</keyword>
<keyword id="KW-0813">Transport</keyword>
<evidence type="ECO:0000255" key="1">
    <source>
        <dbReference type="HAMAP-Rule" id="MF_01463"/>
    </source>
</evidence>
<reference key="1">
    <citation type="journal article" date="2009" name="PLoS Genet.">
        <title>Localized plasticity in the streamlined genomes of vinyl chloride respiring Dehalococcoides.</title>
        <authorList>
            <person name="McMurdie P.J."/>
            <person name="Behrens S.F."/>
            <person name="Muller J.A."/>
            <person name="Goke J."/>
            <person name="Ritalahti K.M."/>
            <person name="Wagner R."/>
            <person name="Goltsman E."/>
            <person name="Lapidus A."/>
            <person name="Holmes S."/>
            <person name="Loffler F.E."/>
            <person name="Spormann A.M."/>
        </authorList>
    </citation>
    <scope>NUCLEOTIDE SEQUENCE [LARGE SCALE GENOMIC DNA]</scope>
    <source>
        <strain>VS</strain>
    </source>
</reference>